<protein>
    <recommendedName>
        <fullName evidence="1">Mycothiol acetyltransferase</fullName>
        <shortName evidence="1">MSH acetyltransferase</shortName>
        <ecNumber evidence="1">2.3.1.189</ecNumber>
    </recommendedName>
    <alternativeName>
        <fullName evidence="1">Mycothiol synthase</fullName>
    </alternativeName>
</protein>
<proteinExistence type="inferred from homology"/>
<name>MSHD_CORU7</name>
<accession>B1VII5</accession>
<sequence length="339" mass="36334">MTCTFHAYEQLHAQPEVVAAVHTLLREVEQADGVAALGEAFLKGIDGDHGHQHIVAMTDERVVGVLALDGAVTASVSGENPTAELAVAPDVRRQGVARGMLAAAREDLGLTGPLDTWAHGDLAPARAMAEAANARRTRELHKMAVDASPGSDRGEQFRAGAEDAASKVESQGLTVLTYPEAVERFGEELVDEEWVRVNNEAFAWHPEQGGWDIDQLRSARDTAWFDPNGVLMVWSCGEDEDAAGPRCAGFHWTKIPTEEQEEPEGERAGEVYVVCLADEARGKGLGPAITMLGIGELMKRGVGTVELYVEGDNGPAVATYEGLGFGIVHTDVVYRGELN</sequence>
<gene>
    <name evidence="1" type="primary">mshD</name>
    <name type="ordered locus">cu1609</name>
</gene>
<organism>
    <name type="scientific">Corynebacterium urealyticum (strain ATCC 43042 / DSM 7109)</name>
    <dbReference type="NCBI Taxonomy" id="504474"/>
    <lineage>
        <taxon>Bacteria</taxon>
        <taxon>Bacillati</taxon>
        <taxon>Actinomycetota</taxon>
        <taxon>Actinomycetes</taxon>
        <taxon>Mycobacteriales</taxon>
        <taxon>Corynebacteriaceae</taxon>
        <taxon>Corynebacterium</taxon>
    </lineage>
</organism>
<keyword id="KW-0012">Acyltransferase</keyword>
<keyword id="KW-1185">Reference proteome</keyword>
<keyword id="KW-0677">Repeat</keyword>
<keyword id="KW-0808">Transferase</keyword>
<evidence type="ECO:0000255" key="1">
    <source>
        <dbReference type="HAMAP-Rule" id="MF_01698"/>
    </source>
</evidence>
<dbReference type="EC" id="2.3.1.189" evidence="1"/>
<dbReference type="EMBL" id="AM942444">
    <property type="protein sequence ID" value="CAQ05569.1"/>
    <property type="molecule type" value="Genomic_DNA"/>
</dbReference>
<dbReference type="RefSeq" id="WP_012360845.1">
    <property type="nucleotide sequence ID" value="NC_010545.1"/>
</dbReference>
<dbReference type="SMR" id="B1VII5"/>
<dbReference type="STRING" id="504474.cu1609"/>
<dbReference type="GeneID" id="60604394"/>
<dbReference type="KEGG" id="cur:cu1609"/>
<dbReference type="eggNOG" id="COG0456">
    <property type="taxonomic scope" value="Bacteria"/>
</dbReference>
<dbReference type="HOGENOM" id="CLU_068014_0_0_11"/>
<dbReference type="Proteomes" id="UP000001727">
    <property type="component" value="Chromosome"/>
</dbReference>
<dbReference type="GO" id="GO:0035447">
    <property type="term" value="F:mycothiol synthase activity"/>
    <property type="evidence" value="ECO:0007669"/>
    <property type="project" value="UniProtKB-UniRule"/>
</dbReference>
<dbReference type="GO" id="GO:0008999">
    <property type="term" value="F:protein-N-terminal-alanine acetyltransferase activity"/>
    <property type="evidence" value="ECO:0007669"/>
    <property type="project" value="TreeGrafter"/>
</dbReference>
<dbReference type="GO" id="GO:0010125">
    <property type="term" value="P:mycothiol biosynthetic process"/>
    <property type="evidence" value="ECO:0007669"/>
    <property type="project" value="UniProtKB-UniRule"/>
</dbReference>
<dbReference type="CDD" id="cd04301">
    <property type="entry name" value="NAT_SF"/>
    <property type="match status" value="1"/>
</dbReference>
<dbReference type="Gene3D" id="3.40.630.30">
    <property type="match status" value="1"/>
</dbReference>
<dbReference type="HAMAP" id="MF_01698">
    <property type="entry name" value="MshD"/>
    <property type="match status" value="1"/>
</dbReference>
<dbReference type="InterPro" id="IPR016181">
    <property type="entry name" value="Acyl_CoA_acyltransferase"/>
</dbReference>
<dbReference type="InterPro" id="IPR000182">
    <property type="entry name" value="GNAT_dom"/>
</dbReference>
<dbReference type="InterPro" id="IPR050276">
    <property type="entry name" value="MshD_Acetyltransferase"/>
</dbReference>
<dbReference type="InterPro" id="IPR017813">
    <property type="entry name" value="Mycothiol_AcTrfase"/>
</dbReference>
<dbReference type="NCBIfam" id="TIGR03448">
    <property type="entry name" value="mycothiol_MshD"/>
    <property type="match status" value="1"/>
</dbReference>
<dbReference type="PANTHER" id="PTHR43617">
    <property type="entry name" value="L-AMINO ACID N-ACETYLTRANSFERASE"/>
    <property type="match status" value="1"/>
</dbReference>
<dbReference type="PANTHER" id="PTHR43617:SF31">
    <property type="entry name" value="MYCOTHIOL ACETYLTRANSFERASE"/>
    <property type="match status" value="1"/>
</dbReference>
<dbReference type="Pfam" id="PF00583">
    <property type="entry name" value="Acetyltransf_1"/>
    <property type="match status" value="1"/>
</dbReference>
<dbReference type="Pfam" id="PF13508">
    <property type="entry name" value="Acetyltransf_7"/>
    <property type="match status" value="1"/>
</dbReference>
<dbReference type="PIRSF" id="PIRSF021524">
    <property type="entry name" value="MSH_acetyltransferase"/>
    <property type="match status" value="1"/>
</dbReference>
<dbReference type="SUPFAM" id="SSF55729">
    <property type="entry name" value="Acyl-CoA N-acyltransferases (Nat)"/>
    <property type="match status" value="1"/>
</dbReference>
<dbReference type="PROSITE" id="PS51186">
    <property type="entry name" value="GNAT"/>
    <property type="match status" value="2"/>
</dbReference>
<reference key="1">
    <citation type="journal article" date="2008" name="J. Biotechnol.">
        <title>The lifestyle of Corynebacterium urealyticum derived from its complete genome sequence established by pyrosequencing.</title>
        <authorList>
            <person name="Tauch A."/>
            <person name="Trost E."/>
            <person name="Tilker A."/>
            <person name="Ludewig U."/>
            <person name="Schneiker S."/>
            <person name="Goesmann A."/>
            <person name="Arnold W."/>
            <person name="Bekel T."/>
            <person name="Brinkrolf K."/>
            <person name="Brune I."/>
            <person name="Goetker S."/>
            <person name="Kalinowski J."/>
            <person name="Kamp P.-B."/>
            <person name="Lobo F.P."/>
            <person name="Viehoever P."/>
            <person name="Weisshaar B."/>
            <person name="Soriano F."/>
            <person name="Droege M."/>
            <person name="Puehler A."/>
        </authorList>
    </citation>
    <scope>NUCLEOTIDE SEQUENCE [LARGE SCALE GENOMIC DNA]</scope>
    <source>
        <strain>ATCC 43042 / DSM 7109</strain>
    </source>
</reference>
<comment type="function">
    <text evidence="1">Catalyzes the transfer of acetyl from acetyl-CoA to desacetylmycothiol (Cys-GlcN-Ins) to form mycothiol.</text>
</comment>
<comment type="catalytic activity">
    <reaction evidence="1">
        <text>1D-myo-inositol 2-(L-cysteinylamino)-2-deoxy-alpha-D-glucopyranoside + acetyl-CoA = mycothiol + CoA + H(+)</text>
        <dbReference type="Rhea" id="RHEA:26172"/>
        <dbReference type="ChEBI" id="CHEBI:15378"/>
        <dbReference type="ChEBI" id="CHEBI:16768"/>
        <dbReference type="ChEBI" id="CHEBI:57287"/>
        <dbReference type="ChEBI" id="CHEBI:57288"/>
        <dbReference type="ChEBI" id="CHEBI:58887"/>
        <dbReference type="EC" id="2.3.1.189"/>
    </reaction>
</comment>
<comment type="subunit">
    <text evidence="1">Monomer.</text>
</comment>
<comment type="similarity">
    <text evidence="1">Belongs to the acetyltransferase family. MshD subfamily.</text>
</comment>
<feature type="chain" id="PRO_0000400254" description="Mycothiol acetyltransferase">
    <location>
        <begin position="1"/>
        <end position="339"/>
    </location>
</feature>
<feature type="domain" description="N-acetyltransferase 1" evidence="1">
    <location>
        <begin position="8"/>
        <end position="174"/>
    </location>
</feature>
<feature type="domain" description="N-acetyltransferase 2" evidence="1">
    <location>
        <begin position="176"/>
        <end position="339"/>
    </location>
</feature>
<feature type="binding site" evidence="1">
    <location>
        <position position="39"/>
    </location>
    <ligand>
        <name>1D-myo-inositol 2-(L-cysteinylamino)-2-deoxy-alpha-D-glucopyranoside</name>
        <dbReference type="ChEBI" id="CHEBI:58887"/>
    </ligand>
</feature>
<feature type="binding site" evidence="1">
    <location>
        <begin position="85"/>
        <end position="87"/>
    </location>
    <ligand>
        <name>acetyl-CoA</name>
        <dbReference type="ChEBI" id="CHEBI:57288"/>
        <label>1</label>
    </ligand>
</feature>
<feature type="binding site" evidence="1">
    <location>
        <position position="207"/>
    </location>
    <ligand>
        <name>1D-myo-inositol 2-(L-cysteinylamino)-2-deoxy-alpha-D-glucopyranoside</name>
        <dbReference type="ChEBI" id="CHEBI:58887"/>
    </ligand>
</feature>
<feature type="binding site" evidence="1">
    <location>
        <position position="254"/>
    </location>
    <ligand>
        <name>1D-myo-inositol 2-(L-cysteinylamino)-2-deoxy-alpha-D-glucopyranoside</name>
        <dbReference type="ChEBI" id="CHEBI:58887"/>
    </ligand>
</feature>
<feature type="binding site" evidence="1">
    <location>
        <position position="270"/>
    </location>
    <ligand>
        <name>1D-myo-inositol 2-(L-cysteinylamino)-2-deoxy-alpha-D-glucopyranoside</name>
        <dbReference type="ChEBI" id="CHEBI:58887"/>
    </ligand>
</feature>
<feature type="binding site" evidence="1">
    <location>
        <begin position="274"/>
        <end position="276"/>
    </location>
    <ligand>
        <name>acetyl-CoA</name>
        <dbReference type="ChEBI" id="CHEBI:57288"/>
        <label>2</label>
    </ligand>
</feature>
<feature type="binding site" evidence="1">
    <location>
        <position position="308"/>
    </location>
    <ligand>
        <name>1D-myo-inositol 2-(L-cysteinylamino)-2-deoxy-alpha-D-glucopyranoside</name>
        <dbReference type="ChEBI" id="CHEBI:58887"/>
    </ligand>
</feature>